<sequence>MRLNSLSPAEGAKHSAKRLGRGIGSGLGKTGGRGHKGQKSRTGGGVRRGFEGGQMPLYRRLPKFGFTSLKSFHVAEIRLNDLAKVDGNEVTLESLKAANVITKDILSVKVILAGKIEKAVVVKGLGVTKGAKAAIEAAGGSIEE</sequence>
<comment type="function">
    <text evidence="1">Binds to the 23S rRNA.</text>
</comment>
<comment type="subunit">
    <text evidence="1">Part of the 50S ribosomal subunit.</text>
</comment>
<comment type="similarity">
    <text evidence="1">Belongs to the universal ribosomal protein uL15 family.</text>
</comment>
<proteinExistence type="inferred from homology"/>
<accession>A3N376</accession>
<gene>
    <name evidence="1" type="primary">rplO</name>
    <name type="ordered locus">APL_1778</name>
</gene>
<protein>
    <recommendedName>
        <fullName evidence="1">Large ribosomal subunit protein uL15</fullName>
    </recommendedName>
    <alternativeName>
        <fullName evidence="3">50S ribosomal protein L15</fullName>
    </alternativeName>
</protein>
<name>RL15_ACTP2</name>
<reference key="1">
    <citation type="journal article" date="2008" name="J. Bacteriol.">
        <title>The complete genome sequence of Actinobacillus pleuropneumoniae L20 (serotype 5b).</title>
        <authorList>
            <person name="Foote S.J."/>
            <person name="Bosse J.T."/>
            <person name="Bouevitch A.B."/>
            <person name="Langford P.R."/>
            <person name="Young N.M."/>
            <person name="Nash J.H.E."/>
        </authorList>
    </citation>
    <scope>NUCLEOTIDE SEQUENCE [LARGE SCALE GENOMIC DNA]</scope>
    <source>
        <strain>L20</strain>
    </source>
</reference>
<keyword id="KW-1185">Reference proteome</keyword>
<keyword id="KW-0687">Ribonucleoprotein</keyword>
<keyword id="KW-0689">Ribosomal protein</keyword>
<keyword id="KW-0694">RNA-binding</keyword>
<keyword id="KW-0699">rRNA-binding</keyword>
<evidence type="ECO:0000255" key="1">
    <source>
        <dbReference type="HAMAP-Rule" id="MF_01341"/>
    </source>
</evidence>
<evidence type="ECO:0000256" key="2">
    <source>
        <dbReference type="SAM" id="MobiDB-lite"/>
    </source>
</evidence>
<evidence type="ECO:0000305" key="3"/>
<feature type="chain" id="PRO_1000054419" description="Large ribosomal subunit protein uL15">
    <location>
        <begin position="1"/>
        <end position="144"/>
    </location>
</feature>
<feature type="region of interest" description="Disordered" evidence="2">
    <location>
        <begin position="1"/>
        <end position="52"/>
    </location>
</feature>
<feature type="compositionally biased region" description="Gly residues" evidence="2">
    <location>
        <begin position="21"/>
        <end position="31"/>
    </location>
</feature>
<organism>
    <name type="scientific">Actinobacillus pleuropneumoniae serotype 5b (strain L20)</name>
    <dbReference type="NCBI Taxonomy" id="416269"/>
    <lineage>
        <taxon>Bacteria</taxon>
        <taxon>Pseudomonadati</taxon>
        <taxon>Pseudomonadota</taxon>
        <taxon>Gammaproteobacteria</taxon>
        <taxon>Pasteurellales</taxon>
        <taxon>Pasteurellaceae</taxon>
        <taxon>Actinobacillus</taxon>
    </lineage>
</organism>
<dbReference type="EMBL" id="CP000569">
    <property type="protein sequence ID" value="ABN74862.1"/>
    <property type="molecule type" value="Genomic_DNA"/>
</dbReference>
<dbReference type="RefSeq" id="WP_005602615.1">
    <property type="nucleotide sequence ID" value="NC_009053.1"/>
</dbReference>
<dbReference type="SMR" id="A3N376"/>
<dbReference type="STRING" id="416269.APL_1778"/>
<dbReference type="EnsemblBacteria" id="ABN74862">
    <property type="protein sequence ID" value="ABN74862"/>
    <property type="gene ID" value="APL_1778"/>
</dbReference>
<dbReference type="KEGG" id="apl:APL_1778"/>
<dbReference type="eggNOG" id="COG0200">
    <property type="taxonomic scope" value="Bacteria"/>
</dbReference>
<dbReference type="HOGENOM" id="CLU_055188_4_2_6"/>
<dbReference type="Proteomes" id="UP000001432">
    <property type="component" value="Chromosome"/>
</dbReference>
<dbReference type="GO" id="GO:0022625">
    <property type="term" value="C:cytosolic large ribosomal subunit"/>
    <property type="evidence" value="ECO:0007669"/>
    <property type="project" value="TreeGrafter"/>
</dbReference>
<dbReference type="GO" id="GO:0019843">
    <property type="term" value="F:rRNA binding"/>
    <property type="evidence" value="ECO:0007669"/>
    <property type="project" value="UniProtKB-UniRule"/>
</dbReference>
<dbReference type="GO" id="GO:0003735">
    <property type="term" value="F:structural constituent of ribosome"/>
    <property type="evidence" value="ECO:0007669"/>
    <property type="project" value="InterPro"/>
</dbReference>
<dbReference type="GO" id="GO:0006412">
    <property type="term" value="P:translation"/>
    <property type="evidence" value="ECO:0007669"/>
    <property type="project" value="UniProtKB-UniRule"/>
</dbReference>
<dbReference type="Gene3D" id="3.100.10.10">
    <property type="match status" value="1"/>
</dbReference>
<dbReference type="HAMAP" id="MF_01341">
    <property type="entry name" value="Ribosomal_uL15"/>
    <property type="match status" value="1"/>
</dbReference>
<dbReference type="InterPro" id="IPR030878">
    <property type="entry name" value="Ribosomal_uL15"/>
</dbReference>
<dbReference type="InterPro" id="IPR021131">
    <property type="entry name" value="Ribosomal_uL15/eL18"/>
</dbReference>
<dbReference type="InterPro" id="IPR036227">
    <property type="entry name" value="Ribosomal_uL15/eL18_sf"/>
</dbReference>
<dbReference type="InterPro" id="IPR005749">
    <property type="entry name" value="Ribosomal_uL15_bac-type"/>
</dbReference>
<dbReference type="InterPro" id="IPR001196">
    <property type="entry name" value="Ribosomal_uL15_CS"/>
</dbReference>
<dbReference type="NCBIfam" id="TIGR01071">
    <property type="entry name" value="rplO_bact"/>
    <property type="match status" value="1"/>
</dbReference>
<dbReference type="PANTHER" id="PTHR12934">
    <property type="entry name" value="50S RIBOSOMAL PROTEIN L15"/>
    <property type="match status" value="1"/>
</dbReference>
<dbReference type="PANTHER" id="PTHR12934:SF11">
    <property type="entry name" value="LARGE RIBOSOMAL SUBUNIT PROTEIN UL15M"/>
    <property type="match status" value="1"/>
</dbReference>
<dbReference type="Pfam" id="PF00828">
    <property type="entry name" value="Ribosomal_L27A"/>
    <property type="match status" value="1"/>
</dbReference>
<dbReference type="SUPFAM" id="SSF52080">
    <property type="entry name" value="Ribosomal proteins L15p and L18e"/>
    <property type="match status" value="1"/>
</dbReference>
<dbReference type="PROSITE" id="PS00475">
    <property type="entry name" value="RIBOSOMAL_L15"/>
    <property type="match status" value="1"/>
</dbReference>